<sequence>MSTHVICDFDGTITEEDNIIALMRRFAPPEWVELKDSVLNQTLSIREGVGQMFSLLPSNQQERYREFLQSTITLRAGFVEFLQETQSHGFRFDVVSGGMDFFVHPILEGHVAPEHIFCNHVDFSGETARVTWPHACDVHCLNDCGCCKPTIARQIVSPTDTLIVIGDSVTDFEIAKRADVVYARGQLISLCEAEGIRHVPFETFYDISAYMKGVNV</sequence>
<proteinExistence type="inferred from homology"/>
<dbReference type="EC" id="3.1.3.87" evidence="1"/>
<dbReference type="EMBL" id="CP001615">
    <property type="protein sequence ID" value="ACQ70364.1"/>
    <property type="molecule type" value="Genomic_DNA"/>
</dbReference>
<dbReference type="RefSeq" id="WP_012727483.1">
    <property type="nucleotide sequence ID" value="NC_012673.1"/>
</dbReference>
<dbReference type="SMR" id="C4KZ51"/>
<dbReference type="STRING" id="360911.EAT1b_1437"/>
<dbReference type="KEGG" id="eat:EAT1b_1437"/>
<dbReference type="eggNOG" id="COG4359">
    <property type="taxonomic scope" value="Bacteria"/>
</dbReference>
<dbReference type="HOGENOM" id="CLU_058495_2_1_9"/>
<dbReference type="OrthoDB" id="9804940at2"/>
<dbReference type="UniPathway" id="UPA00904">
    <property type="reaction ID" value="UER00877"/>
</dbReference>
<dbReference type="Proteomes" id="UP000000716">
    <property type="component" value="Chromosome"/>
</dbReference>
<dbReference type="GO" id="GO:0043716">
    <property type="term" value="F:2-hydroxy-3-keto-5-methylthiopentenyl-1-phosphate phosphatase activity"/>
    <property type="evidence" value="ECO:0007669"/>
    <property type="project" value="UniProtKB-UniRule"/>
</dbReference>
<dbReference type="GO" id="GO:0019509">
    <property type="term" value="P:L-methionine salvage from methylthioadenosine"/>
    <property type="evidence" value="ECO:0007669"/>
    <property type="project" value="UniProtKB-UniRule"/>
</dbReference>
<dbReference type="CDD" id="cd07524">
    <property type="entry name" value="HAD_Pase"/>
    <property type="match status" value="1"/>
</dbReference>
<dbReference type="Gene3D" id="3.90.1470.20">
    <property type="match status" value="1"/>
</dbReference>
<dbReference type="Gene3D" id="3.40.50.1000">
    <property type="entry name" value="HAD superfamily/HAD-like"/>
    <property type="match status" value="1"/>
</dbReference>
<dbReference type="HAMAP" id="MF_01680">
    <property type="entry name" value="Salvage_MtnX"/>
    <property type="match status" value="1"/>
</dbReference>
<dbReference type="InterPro" id="IPR050849">
    <property type="entry name" value="HAD-like_hydrolase_phosphatase"/>
</dbReference>
<dbReference type="InterPro" id="IPR036412">
    <property type="entry name" value="HAD-like_sf"/>
</dbReference>
<dbReference type="InterPro" id="IPR017718">
    <property type="entry name" value="HAD-SF_hydro_IB_MtnX"/>
</dbReference>
<dbReference type="InterPro" id="IPR006384">
    <property type="entry name" value="HAD_hydro_PyrdxlP_Pase-like"/>
</dbReference>
<dbReference type="InterPro" id="IPR023214">
    <property type="entry name" value="HAD_sf"/>
</dbReference>
<dbReference type="NCBIfam" id="TIGR01489">
    <property type="entry name" value="DKMTPPase-SF"/>
    <property type="match status" value="1"/>
</dbReference>
<dbReference type="NCBIfam" id="TIGR01488">
    <property type="entry name" value="HAD-SF-IB"/>
    <property type="match status" value="1"/>
</dbReference>
<dbReference type="NCBIfam" id="NF007103">
    <property type="entry name" value="PRK09552.1"/>
    <property type="match status" value="1"/>
</dbReference>
<dbReference type="PANTHER" id="PTHR28181:SF2">
    <property type="entry name" value="PHOSPHORIC MONOESTER HYDROLASE"/>
    <property type="match status" value="1"/>
</dbReference>
<dbReference type="PANTHER" id="PTHR28181">
    <property type="entry name" value="UPF0655 PROTEIN YCR015C"/>
    <property type="match status" value="1"/>
</dbReference>
<dbReference type="Pfam" id="PF12710">
    <property type="entry name" value="HAD"/>
    <property type="match status" value="1"/>
</dbReference>
<dbReference type="SUPFAM" id="SSF56784">
    <property type="entry name" value="HAD-like"/>
    <property type="match status" value="1"/>
</dbReference>
<evidence type="ECO:0000255" key="1">
    <source>
        <dbReference type="HAMAP-Rule" id="MF_01680"/>
    </source>
</evidence>
<reference key="1">
    <citation type="journal article" date="2011" name="J. Bacteriol.">
        <title>Complete genome sequence of the Thermophilic Bacterium Exiguobacterium sp. AT1b.</title>
        <authorList>
            <person name="Vishnivetskaya T.A."/>
            <person name="Lucas S."/>
            <person name="Copeland A."/>
            <person name="Lapidus A."/>
            <person name="Glavina del Rio T."/>
            <person name="Dalin E."/>
            <person name="Tice H."/>
            <person name="Bruce D.C."/>
            <person name="Goodwin L.A."/>
            <person name="Pitluck S."/>
            <person name="Saunders E."/>
            <person name="Brettin T."/>
            <person name="Detter C."/>
            <person name="Han C."/>
            <person name="Larimer F."/>
            <person name="Land M.L."/>
            <person name="Hauser L.J."/>
            <person name="Kyrpides N.C."/>
            <person name="Ovchinnikova G."/>
            <person name="Kathariou S."/>
            <person name="Ramaley R.F."/>
            <person name="Rodrigues D.F."/>
            <person name="Hendrix C."/>
            <person name="Richardson P."/>
            <person name="Tiedje J.M."/>
        </authorList>
    </citation>
    <scope>NUCLEOTIDE SEQUENCE [LARGE SCALE GENOMIC DNA]</scope>
    <source>
        <strain>ATCC BAA-1283 / AT1b</strain>
    </source>
</reference>
<protein>
    <recommendedName>
        <fullName evidence="1">2-hydroxy-3-keto-5-methylthiopentenyl-1-phosphate phosphatase</fullName>
        <shortName evidence="1">HK-MTPenyl-1-P phosphatase</shortName>
        <ecNumber evidence="1">3.1.3.87</ecNumber>
    </recommendedName>
</protein>
<name>MTNX_EXISA</name>
<feature type="chain" id="PRO_1000215903" description="2-hydroxy-3-keto-5-methylthiopentenyl-1-phosphate phosphatase">
    <location>
        <begin position="1"/>
        <end position="216"/>
    </location>
</feature>
<comment type="function">
    <text evidence="1">Dephosphorylates 2-hydroxy-3-keto-5-methylthiopentenyl-1-phosphate (HK-MTPenyl-1-P) yielding 1,2-dihydroxy-3-keto-5-methylthiopentene (DHK-MTPene).</text>
</comment>
<comment type="catalytic activity">
    <reaction evidence="1">
        <text>2-hydroxy-5-methylsulfanyl-3-oxopent-1-enyl phosphate + H2O = 1,2-dihydroxy-5-(methylsulfanyl)pent-1-en-3-one + phosphate</text>
        <dbReference type="Rhea" id="RHEA:14481"/>
        <dbReference type="ChEBI" id="CHEBI:15377"/>
        <dbReference type="ChEBI" id="CHEBI:43474"/>
        <dbReference type="ChEBI" id="CHEBI:49252"/>
        <dbReference type="ChEBI" id="CHEBI:59505"/>
        <dbReference type="EC" id="3.1.3.87"/>
    </reaction>
</comment>
<comment type="pathway">
    <text evidence="1">Amino-acid biosynthesis; L-methionine biosynthesis via salvage pathway; L-methionine from S-methyl-5-thio-alpha-D-ribose 1-phosphate: step 4/6.</text>
</comment>
<comment type="similarity">
    <text evidence="1">Belongs to the HAD-like hydrolase superfamily. MtnX family.</text>
</comment>
<keyword id="KW-0028">Amino-acid biosynthesis</keyword>
<keyword id="KW-0378">Hydrolase</keyword>
<keyword id="KW-0486">Methionine biosynthesis</keyword>
<organism>
    <name type="scientific">Exiguobacterium sp. (strain ATCC BAA-1283 / AT1b)</name>
    <dbReference type="NCBI Taxonomy" id="360911"/>
    <lineage>
        <taxon>Bacteria</taxon>
        <taxon>Bacillati</taxon>
        <taxon>Bacillota</taxon>
        <taxon>Bacilli</taxon>
        <taxon>Bacillales</taxon>
        <taxon>Bacillales Family XII. Incertae Sedis</taxon>
        <taxon>Exiguobacterium</taxon>
    </lineage>
</organism>
<gene>
    <name evidence="1" type="primary">mtnX</name>
    <name type="ordered locus">EAT1b_1437</name>
</gene>
<accession>C4KZ51</accession>